<reference key="1">
    <citation type="journal article" date="2005" name="Genome Res.">
        <title>Living with two extremes: conclusions from the genome sequence of Natronomonas pharaonis.</title>
        <authorList>
            <person name="Falb M."/>
            <person name="Pfeiffer F."/>
            <person name="Palm P."/>
            <person name="Rodewald K."/>
            <person name="Hickmann V."/>
            <person name="Tittor J."/>
            <person name="Oesterhelt D."/>
        </authorList>
    </citation>
    <scope>NUCLEOTIDE SEQUENCE [LARGE SCALE GENOMIC DNA]</scope>
    <source>
        <strain>ATCC 35678 / DSM 2160 / CIP 103997 / JCM 8858 / NBRC 14720 / NCIMB 2260 / Gabara</strain>
    </source>
</reference>
<evidence type="ECO:0000255" key="1">
    <source>
        <dbReference type="HAMAP-Rule" id="MF_01258"/>
    </source>
</evidence>
<proteinExistence type="inferred from homology"/>
<comment type="function">
    <text evidence="1">Catalyzes the GTP-dependent successive addition of two or more gamma-linked L-glutamates to the L-lactyl phosphodiester of 7,8-didemethyl-8-hydroxy-5-deazariboflavin (F420-0) to form coenzyme F420-0-glutamyl-glutamate (F420-2) or polyglutamated F420 derivatives.</text>
</comment>
<comment type="catalytic activity">
    <reaction evidence="1">
        <text>oxidized coenzyme F420-0 + GTP + L-glutamate = oxidized coenzyme F420-1 + GDP + phosphate + H(+)</text>
        <dbReference type="Rhea" id="RHEA:30555"/>
        <dbReference type="ChEBI" id="CHEBI:15378"/>
        <dbReference type="ChEBI" id="CHEBI:29985"/>
        <dbReference type="ChEBI" id="CHEBI:37565"/>
        <dbReference type="ChEBI" id="CHEBI:43474"/>
        <dbReference type="ChEBI" id="CHEBI:58189"/>
        <dbReference type="ChEBI" id="CHEBI:59907"/>
        <dbReference type="ChEBI" id="CHEBI:59920"/>
        <dbReference type="EC" id="6.3.2.31"/>
    </reaction>
</comment>
<comment type="catalytic activity">
    <reaction evidence="1">
        <text>oxidized coenzyme F420-1 + GTP + L-glutamate = oxidized coenzyme F420-2 + GDP + phosphate + H(+)</text>
        <dbReference type="Rhea" id="RHEA:30523"/>
        <dbReference type="ChEBI" id="CHEBI:15378"/>
        <dbReference type="ChEBI" id="CHEBI:29985"/>
        <dbReference type="ChEBI" id="CHEBI:37565"/>
        <dbReference type="ChEBI" id="CHEBI:43474"/>
        <dbReference type="ChEBI" id="CHEBI:57922"/>
        <dbReference type="ChEBI" id="CHEBI:58189"/>
        <dbReference type="ChEBI" id="CHEBI:59920"/>
        <dbReference type="EC" id="6.3.2.34"/>
    </reaction>
</comment>
<comment type="cofactor">
    <cofactor evidence="1">
        <name>Mg(2+)</name>
        <dbReference type="ChEBI" id="CHEBI:18420"/>
    </cofactor>
    <cofactor evidence="1">
        <name>Mn(2+)</name>
        <dbReference type="ChEBI" id="CHEBI:29035"/>
    </cofactor>
    <text evidence="1">Binds 2 divalent metal cations per subunit. The ions could be magnesium and/or manganese.</text>
</comment>
<comment type="cofactor">
    <cofactor evidence="1">
        <name>K(+)</name>
        <dbReference type="ChEBI" id="CHEBI:29103"/>
    </cofactor>
    <text evidence="1">Monovalent cation. The ion could be potassium.</text>
</comment>
<comment type="pathway">
    <text evidence="1">Cofactor biosynthesis; coenzyme F420 biosynthesis.</text>
</comment>
<comment type="subunit">
    <text evidence="1">Homodimer.</text>
</comment>
<comment type="similarity">
    <text evidence="1">Belongs to the CofE family.</text>
</comment>
<sequence length="253" mass="27293">MEALAVDGLPEIHEGDDLAALLEDRVDFADGDVLCVASTIVSKAEGRAFDRESFPPSDRAKAIADRLSTITGEQKDPRFAQAVLEESEELLTESPFLLSVTRFGHITVNAGIDRSNVPGADLLLLPEDPTASAERLSSALGVPVVVTDTSGRPFRYGQRGVAVGWAGLPAARDWRGETDRDGRELGVTVQAVVDELAATANLVAGEGDDGTPAVVVREWSFGDHDGSDLLFRREEDDIVREALRQWTFDGHQQ</sequence>
<gene>
    <name evidence="1" type="primary">cofE</name>
    <name type="ordered locus">NP_1054A</name>
</gene>
<organism>
    <name type="scientific">Natronomonas pharaonis (strain ATCC 35678 / DSM 2160 / CIP 103997 / JCM 8858 / NBRC 14720 / NCIMB 2260 / Gabara)</name>
    <name type="common">Halobacterium pharaonis</name>
    <dbReference type="NCBI Taxonomy" id="348780"/>
    <lineage>
        <taxon>Archaea</taxon>
        <taxon>Methanobacteriati</taxon>
        <taxon>Methanobacteriota</taxon>
        <taxon>Stenosarchaea group</taxon>
        <taxon>Halobacteria</taxon>
        <taxon>Halobacteriales</taxon>
        <taxon>Haloarculaceae</taxon>
        <taxon>Natronomonas</taxon>
    </lineage>
</organism>
<protein>
    <recommendedName>
        <fullName evidence="1">Coenzyme F420:L-glutamate ligase</fullName>
        <ecNumber evidence="1">6.3.2.31</ecNumber>
        <ecNumber evidence="1">6.3.2.34</ecNumber>
    </recommendedName>
    <alternativeName>
        <fullName evidence="1">Coenzyme F420-0:L-glutamate ligase</fullName>
    </alternativeName>
    <alternativeName>
        <fullName evidence="1">Coenzyme F420-1:gamma-L-glutamate ligase</fullName>
    </alternativeName>
</protein>
<name>COFE_NATPD</name>
<feature type="chain" id="PRO_1000067259" description="Coenzyme F420:L-glutamate ligase">
    <location>
        <begin position="1"/>
        <end position="253"/>
    </location>
</feature>
<feature type="binding site" evidence="1">
    <location>
        <begin position="9"/>
        <end position="12"/>
    </location>
    <ligand>
        <name>GTP</name>
        <dbReference type="ChEBI" id="CHEBI:37565"/>
    </ligand>
</feature>
<feature type="binding site" evidence="1">
    <location>
        <begin position="38"/>
        <end position="39"/>
    </location>
    <ligand>
        <name>GTP</name>
        <dbReference type="ChEBI" id="CHEBI:37565"/>
    </ligand>
</feature>
<feature type="binding site" evidence="1">
    <location>
        <position position="43"/>
    </location>
    <ligand>
        <name>GTP</name>
        <dbReference type="ChEBI" id="CHEBI:37565"/>
    </ligand>
</feature>
<feature type="binding site" evidence="1">
    <location>
        <position position="113"/>
    </location>
    <ligand>
        <name>a divalent metal cation</name>
        <dbReference type="ChEBI" id="CHEBI:60240"/>
        <label>1</label>
    </ligand>
</feature>
<feature type="binding site" evidence="1">
    <location>
        <position position="116"/>
    </location>
    <ligand>
        <name>GTP</name>
        <dbReference type="ChEBI" id="CHEBI:37565"/>
    </ligand>
</feature>
<feature type="binding site" evidence="1">
    <location>
        <position position="148"/>
    </location>
    <ligand>
        <name>a divalent metal cation</name>
        <dbReference type="ChEBI" id="CHEBI:60240"/>
        <label>1</label>
    </ligand>
</feature>
<feature type="binding site" evidence="1">
    <location>
        <position position="149"/>
    </location>
    <ligand>
        <name>a divalent metal cation</name>
        <dbReference type="ChEBI" id="CHEBI:60240"/>
        <label>2</label>
    </ligand>
</feature>
<feature type="binding site" evidence="1">
    <location>
        <begin position="204"/>
        <end position="211"/>
    </location>
    <ligand>
        <name>GTP</name>
        <dbReference type="ChEBI" id="CHEBI:37565"/>
    </ligand>
</feature>
<feature type="binding site" evidence="1">
    <location>
        <position position="206"/>
    </location>
    <ligand>
        <name>a divalent metal cation</name>
        <dbReference type="ChEBI" id="CHEBI:60240"/>
        <label>2</label>
    </ligand>
</feature>
<dbReference type="EC" id="6.3.2.31" evidence="1"/>
<dbReference type="EC" id="6.3.2.34" evidence="1"/>
<dbReference type="EMBL" id="CR936257">
    <property type="protein sequence ID" value="CAI48618.1"/>
    <property type="molecule type" value="Genomic_DNA"/>
</dbReference>
<dbReference type="RefSeq" id="WP_011322253.1">
    <property type="nucleotide sequence ID" value="NC_007426.1"/>
</dbReference>
<dbReference type="SMR" id="Q3ITB6"/>
<dbReference type="STRING" id="348780.NP_1054A"/>
<dbReference type="EnsemblBacteria" id="CAI48618">
    <property type="protein sequence ID" value="CAI48618"/>
    <property type="gene ID" value="NP_1054A"/>
</dbReference>
<dbReference type="GeneID" id="3701040"/>
<dbReference type="KEGG" id="nph:NP_1054A"/>
<dbReference type="eggNOG" id="arCOG02714">
    <property type="taxonomic scope" value="Archaea"/>
</dbReference>
<dbReference type="HOGENOM" id="CLU_051152_1_1_2"/>
<dbReference type="OrthoDB" id="11383at2157"/>
<dbReference type="UniPathway" id="UPA00071"/>
<dbReference type="Proteomes" id="UP000002698">
    <property type="component" value="Chromosome"/>
</dbReference>
<dbReference type="GO" id="GO:0052618">
    <property type="term" value="F:coenzyme F420-0:L-glutamate ligase activity"/>
    <property type="evidence" value="ECO:0007669"/>
    <property type="project" value="UniProtKB-UniRule"/>
</dbReference>
<dbReference type="GO" id="GO:0052619">
    <property type="term" value="F:coenzyme F420-1:gamma-L-glutamate ligase activity"/>
    <property type="evidence" value="ECO:0007669"/>
    <property type="project" value="UniProtKB-UniRule"/>
</dbReference>
<dbReference type="GO" id="GO:0005525">
    <property type="term" value="F:GTP binding"/>
    <property type="evidence" value="ECO:0007669"/>
    <property type="project" value="UniProtKB-KW"/>
</dbReference>
<dbReference type="GO" id="GO:0046872">
    <property type="term" value="F:metal ion binding"/>
    <property type="evidence" value="ECO:0007669"/>
    <property type="project" value="UniProtKB-KW"/>
</dbReference>
<dbReference type="GO" id="GO:0052645">
    <property type="term" value="P:F420-0 metabolic process"/>
    <property type="evidence" value="ECO:0007669"/>
    <property type="project" value="UniProtKB-UniRule"/>
</dbReference>
<dbReference type="Gene3D" id="3.30.1330.100">
    <property type="entry name" value="CofE-like"/>
    <property type="match status" value="1"/>
</dbReference>
<dbReference type="Gene3D" id="3.90.1660.10">
    <property type="entry name" value="CofE-like domain"/>
    <property type="match status" value="1"/>
</dbReference>
<dbReference type="HAMAP" id="MF_01258">
    <property type="entry name" value="F420_ligase_CofE"/>
    <property type="match status" value="1"/>
</dbReference>
<dbReference type="InterPro" id="IPR008225">
    <property type="entry name" value="F420-0_g-glutamyl_ligase"/>
</dbReference>
<dbReference type="InterPro" id="IPR002847">
    <property type="entry name" value="F420-0_gamma-glut_ligase-dom"/>
</dbReference>
<dbReference type="InterPro" id="IPR023659">
    <property type="entry name" value="F420_ligase_CofE_arc"/>
</dbReference>
<dbReference type="NCBIfam" id="TIGR01916">
    <property type="entry name" value="F420_cofE"/>
    <property type="match status" value="1"/>
</dbReference>
<dbReference type="NCBIfam" id="NF009809">
    <property type="entry name" value="PRK13293.1"/>
    <property type="match status" value="1"/>
</dbReference>
<dbReference type="PANTHER" id="PTHR47917">
    <property type="match status" value="1"/>
</dbReference>
<dbReference type="PANTHER" id="PTHR47917:SF1">
    <property type="entry name" value="COENZYME F420:L-GLUTAMATE LIGASE"/>
    <property type="match status" value="1"/>
</dbReference>
<dbReference type="Pfam" id="PF01996">
    <property type="entry name" value="F420_ligase"/>
    <property type="match status" value="1"/>
</dbReference>
<dbReference type="SUPFAM" id="SSF144010">
    <property type="entry name" value="CofE-like"/>
    <property type="match status" value="1"/>
</dbReference>
<keyword id="KW-0342">GTP-binding</keyword>
<keyword id="KW-0436">Ligase</keyword>
<keyword id="KW-0460">Magnesium</keyword>
<keyword id="KW-0464">Manganese</keyword>
<keyword id="KW-0479">Metal-binding</keyword>
<keyword id="KW-0547">Nucleotide-binding</keyword>
<keyword id="KW-0630">Potassium</keyword>
<keyword id="KW-1185">Reference proteome</keyword>
<accession>Q3ITB6</accession>